<sequence length="311" mass="34427">MANPLYQKHIISINDLSRDDLNLVLATAAKLKANPQPELLKHKVIASCFFEASTRTRLSFETSMHRLGASVVGFSDSANTSLGKKGETLADTISVISTYVDAIVMRHPQEGAARLATEFSGNVPVLNAGDGSNQHPTQTLLDLFTIQETQGRLDNLHVAMVGDLKYGRTVHSLTQALAKFDGNRFYFIAPDALAMPQYILDMLDEKGIAWSLHSSIEEVMAEVDILYMTRVQKERLDPSEYANVKAQFVLRASDLHNAKANMKVLHPLPRVDEIATDVDKTPHAWYFQQAGNGIFARQALLALVLNRDLVL</sequence>
<proteinExistence type="inferred from homology"/>
<feature type="chain" id="PRO_1000088762" description="Aspartate carbamoyltransferase catalytic subunit">
    <location>
        <begin position="1"/>
        <end position="311"/>
    </location>
</feature>
<feature type="binding site" evidence="1">
    <location>
        <position position="55"/>
    </location>
    <ligand>
        <name>carbamoyl phosphate</name>
        <dbReference type="ChEBI" id="CHEBI:58228"/>
    </ligand>
</feature>
<feature type="binding site" evidence="1">
    <location>
        <position position="56"/>
    </location>
    <ligand>
        <name>carbamoyl phosphate</name>
        <dbReference type="ChEBI" id="CHEBI:58228"/>
    </ligand>
</feature>
<feature type="binding site" evidence="1">
    <location>
        <position position="85"/>
    </location>
    <ligand>
        <name>L-aspartate</name>
        <dbReference type="ChEBI" id="CHEBI:29991"/>
    </ligand>
</feature>
<feature type="binding site" evidence="1">
    <location>
        <position position="106"/>
    </location>
    <ligand>
        <name>carbamoyl phosphate</name>
        <dbReference type="ChEBI" id="CHEBI:58228"/>
    </ligand>
</feature>
<feature type="binding site" evidence="1">
    <location>
        <position position="135"/>
    </location>
    <ligand>
        <name>carbamoyl phosphate</name>
        <dbReference type="ChEBI" id="CHEBI:58228"/>
    </ligand>
</feature>
<feature type="binding site" evidence="1">
    <location>
        <position position="138"/>
    </location>
    <ligand>
        <name>carbamoyl phosphate</name>
        <dbReference type="ChEBI" id="CHEBI:58228"/>
    </ligand>
</feature>
<feature type="binding site" evidence="1">
    <location>
        <position position="168"/>
    </location>
    <ligand>
        <name>L-aspartate</name>
        <dbReference type="ChEBI" id="CHEBI:29991"/>
    </ligand>
</feature>
<feature type="binding site" evidence="1">
    <location>
        <position position="230"/>
    </location>
    <ligand>
        <name>L-aspartate</name>
        <dbReference type="ChEBI" id="CHEBI:29991"/>
    </ligand>
</feature>
<feature type="binding site" evidence="1">
    <location>
        <position position="268"/>
    </location>
    <ligand>
        <name>carbamoyl phosphate</name>
        <dbReference type="ChEBI" id="CHEBI:58228"/>
    </ligand>
</feature>
<feature type="binding site" evidence="1">
    <location>
        <position position="269"/>
    </location>
    <ligand>
        <name>carbamoyl phosphate</name>
        <dbReference type="ChEBI" id="CHEBI:58228"/>
    </ligand>
</feature>
<comment type="function">
    <text evidence="1">Catalyzes the condensation of carbamoyl phosphate and aspartate to form carbamoyl aspartate and inorganic phosphate, the committed step in the de novo pyrimidine nucleotide biosynthesis pathway.</text>
</comment>
<comment type="catalytic activity">
    <reaction evidence="1">
        <text>carbamoyl phosphate + L-aspartate = N-carbamoyl-L-aspartate + phosphate + H(+)</text>
        <dbReference type="Rhea" id="RHEA:20013"/>
        <dbReference type="ChEBI" id="CHEBI:15378"/>
        <dbReference type="ChEBI" id="CHEBI:29991"/>
        <dbReference type="ChEBI" id="CHEBI:32814"/>
        <dbReference type="ChEBI" id="CHEBI:43474"/>
        <dbReference type="ChEBI" id="CHEBI:58228"/>
        <dbReference type="EC" id="2.1.3.2"/>
    </reaction>
</comment>
<comment type="pathway">
    <text evidence="1">Pyrimidine metabolism; UMP biosynthesis via de novo pathway; (S)-dihydroorotate from bicarbonate: step 2/3.</text>
</comment>
<comment type="subunit">
    <text evidence="1">Heterododecamer (2C3:3R2) of six catalytic PyrB chains organized as two trimers (C3), and six regulatory PyrI chains organized as three dimers (R2).</text>
</comment>
<comment type="similarity">
    <text evidence="1">Belongs to the aspartate/ornithine carbamoyltransferase superfamily. ATCase family.</text>
</comment>
<name>PYRB_ECOSE</name>
<protein>
    <recommendedName>
        <fullName evidence="1">Aspartate carbamoyltransferase catalytic subunit</fullName>
        <ecNumber evidence="1">2.1.3.2</ecNumber>
    </recommendedName>
    <alternativeName>
        <fullName evidence="1">Aspartate transcarbamylase</fullName>
        <shortName evidence="1">ATCase</shortName>
    </alternativeName>
</protein>
<evidence type="ECO:0000255" key="1">
    <source>
        <dbReference type="HAMAP-Rule" id="MF_00001"/>
    </source>
</evidence>
<reference key="1">
    <citation type="journal article" date="2008" name="DNA Res.">
        <title>Complete genome sequence and comparative analysis of the wild-type commensal Escherichia coli strain SE11 isolated from a healthy adult.</title>
        <authorList>
            <person name="Oshima K."/>
            <person name="Toh H."/>
            <person name="Ogura Y."/>
            <person name="Sasamoto H."/>
            <person name="Morita H."/>
            <person name="Park S.-H."/>
            <person name="Ooka T."/>
            <person name="Iyoda S."/>
            <person name="Taylor T.D."/>
            <person name="Hayashi T."/>
            <person name="Itoh K."/>
            <person name="Hattori M."/>
        </authorList>
    </citation>
    <scope>NUCLEOTIDE SEQUENCE [LARGE SCALE GENOMIC DNA]</scope>
    <source>
        <strain>SE11</strain>
    </source>
</reference>
<dbReference type="EC" id="2.1.3.2" evidence="1"/>
<dbReference type="EMBL" id="AP009240">
    <property type="protein sequence ID" value="BAG80076.1"/>
    <property type="molecule type" value="Genomic_DNA"/>
</dbReference>
<dbReference type="RefSeq" id="WP_000013046.1">
    <property type="nucleotide sequence ID" value="NC_011415.1"/>
</dbReference>
<dbReference type="SMR" id="B6I2F9"/>
<dbReference type="GeneID" id="93777579"/>
<dbReference type="KEGG" id="ecy:ECSE_4552"/>
<dbReference type="HOGENOM" id="CLU_043846_1_2_6"/>
<dbReference type="UniPathway" id="UPA00070">
    <property type="reaction ID" value="UER00116"/>
</dbReference>
<dbReference type="Proteomes" id="UP000008199">
    <property type="component" value="Chromosome"/>
</dbReference>
<dbReference type="GO" id="GO:0005829">
    <property type="term" value="C:cytosol"/>
    <property type="evidence" value="ECO:0007669"/>
    <property type="project" value="TreeGrafter"/>
</dbReference>
<dbReference type="GO" id="GO:0016597">
    <property type="term" value="F:amino acid binding"/>
    <property type="evidence" value="ECO:0007669"/>
    <property type="project" value="InterPro"/>
</dbReference>
<dbReference type="GO" id="GO:0004070">
    <property type="term" value="F:aspartate carbamoyltransferase activity"/>
    <property type="evidence" value="ECO:0007669"/>
    <property type="project" value="UniProtKB-UniRule"/>
</dbReference>
<dbReference type="GO" id="GO:0006207">
    <property type="term" value="P:'de novo' pyrimidine nucleobase biosynthetic process"/>
    <property type="evidence" value="ECO:0007669"/>
    <property type="project" value="InterPro"/>
</dbReference>
<dbReference type="GO" id="GO:0044205">
    <property type="term" value="P:'de novo' UMP biosynthetic process"/>
    <property type="evidence" value="ECO:0007669"/>
    <property type="project" value="UniProtKB-UniRule"/>
</dbReference>
<dbReference type="GO" id="GO:0006520">
    <property type="term" value="P:amino acid metabolic process"/>
    <property type="evidence" value="ECO:0007669"/>
    <property type="project" value="InterPro"/>
</dbReference>
<dbReference type="FunFam" id="3.40.50.1370:FF:000001">
    <property type="entry name" value="Aspartate carbamoyltransferase"/>
    <property type="match status" value="1"/>
</dbReference>
<dbReference type="FunFam" id="3.40.50.1370:FF:000002">
    <property type="entry name" value="Aspartate carbamoyltransferase 2"/>
    <property type="match status" value="1"/>
</dbReference>
<dbReference type="Gene3D" id="3.40.50.1370">
    <property type="entry name" value="Aspartate/ornithine carbamoyltransferase"/>
    <property type="match status" value="2"/>
</dbReference>
<dbReference type="HAMAP" id="MF_00001">
    <property type="entry name" value="Asp_carb_tr"/>
    <property type="match status" value="1"/>
</dbReference>
<dbReference type="InterPro" id="IPR006132">
    <property type="entry name" value="Asp/Orn_carbamoyltranf_P-bd"/>
</dbReference>
<dbReference type="InterPro" id="IPR006130">
    <property type="entry name" value="Asp/Orn_carbamoylTrfase"/>
</dbReference>
<dbReference type="InterPro" id="IPR036901">
    <property type="entry name" value="Asp/Orn_carbamoylTrfase_sf"/>
</dbReference>
<dbReference type="InterPro" id="IPR002082">
    <property type="entry name" value="Asp_carbamoyltransf"/>
</dbReference>
<dbReference type="InterPro" id="IPR006131">
    <property type="entry name" value="Asp_carbamoyltransf_Asp/Orn-bd"/>
</dbReference>
<dbReference type="NCBIfam" id="TIGR00670">
    <property type="entry name" value="asp_carb_tr"/>
    <property type="match status" value="1"/>
</dbReference>
<dbReference type="NCBIfam" id="NF002032">
    <property type="entry name" value="PRK00856.1"/>
    <property type="match status" value="1"/>
</dbReference>
<dbReference type="PANTHER" id="PTHR45753:SF6">
    <property type="entry name" value="ASPARTATE CARBAMOYLTRANSFERASE"/>
    <property type="match status" value="1"/>
</dbReference>
<dbReference type="PANTHER" id="PTHR45753">
    <property type="entry name" value="ORNITHINE CARBAMOYLTRANSFERASE, MITOCHONDRIAL"/>
    <property type="match status" value="1"/>
</dbReference>
<dbReference type="Pfam" id="PF00185">
    <property type="entry name" value="OTCace"/>
    <property type="match status" value="1"/>
</dbReference>
<dbReference type="Pfam" id="PF02729">
    <property type="entry name" value="OTCace_N"/>
    <property type="match status" value="1"/>
</dbReference>
<dbReference type="PRINTS" id="PR00100">
    <property type="entry name" value="AOTCASE"/>
</dbReference>
<dbReference type="PRINTS" id="PR00101">
    <property type="entry name" value="ATCASE"/>
</dbReference>
<dbReference type="SUPFAM" id="SSF53671">
    <property type="entry name" value="Aspartate/ornithine carbamoyltransferase"/>
    <property type="match status" value="1"/>
</dbReference>
<dbReference type="PROSITE" id="PS00097">
    <property type="entry name" value="CARBAMOYLTRANSFERASE"/>
    <property type="match status" value="1"/>
</dbReference>
<organism>
    <name type="scientific">Escherichia coli (strain SE11)</name>
    <dbReference type="NCBI Taxonomy" id="409438"/>
    <lineage>
        <taxon>Bacteria</taxon>
        <taxon>Pseudomonadati</taxon>
        <taxon>Pseudomonadota</taxon>
        <taxon>Gammaproteobacteria</taxon>
        <taxon>Enterobacterales</taxon>
        <taxon>Enterobacteriaceae</taxon>
        <taxon>Escherichia</taxon>
    </lineage>
</organism>
<accession>B6I2F9</accession>
<keyword id="KW-0665">Pyrimidine biosynthesis</keyword>
<keyword id="KW-0808">Transferase</keyword>
<gene>
    <name evidence="1" type="primary">pyrB</name>
    <name type="ordered locus">ECSE_4552</name>
</gene>